<gene>
    <name evidence="1" type="primary">tsaD</name>
    <name type="synonym">gcp</name>
    <name type="ordered locus">STH2921</name>
</gene>
<comment type="function">
    <text evidence="1">Required for the formation of a threonylcarbamoyl group on adenosine at position 37 (t(6)A37) in tRNAs that read codons beginning with adenine. Is involved in the transfer of the threonylcarbamoyl moiety of threonylcarbamoyl-AMP (TC-AMP) to the N6 group of A37, together with TsaE and TsaB. TsaD likely plays a direct catalytic role in this reaction.</text>
</comment>
<comment type="catalytic activity">
    <reaction evidence="1">
        <text>L-threonylcarbamoyladenylate + adenosine(37) in tRNA = N(6)-L-threonylcarbamoyladenosine(37) in tRNA + AMP + H(+)</text>
        <dbReference type="Rhea" id="RHEA:37059"/>
        <dbReference type="Rhea" id="RHEA-COMP:10162"/>
        <dbReference type="Rhea" id="RHEA-COMP:10163"/>
        <dbReference type="ChEBI" id="CHEBI:15378"/>
        <dbReference type="ChEBI" id="CHEBI:73682"/>
        <dbReference type="ChEBI" id="CHEBI:74411"/>
        <dbReference type="ChEBI" id="CHEBI:74418"/>
        <dbReference type="ChEBI" id="CHEBI:456215"/>
        <dbReference type="EC" id="2.3.1.234"/>
    </reaction>
</comment>
<comment type="cofactor">
    <cofactor evidence="1">
        <name>Fe(2+)</name>
        <dbReference type="ChEBI" id="CHEBI:29033"/>
    </cofactor>
    <text evidence="1">Binds 1 Fe(2+) ion per subunit.</text>
</comment>
<comment type="subcellular location">
    <subcellularLocation>
        <location evidence="1">Cytoplasm</location>
    </subcellularLocation>
</comment>
<comment type="similarity">
    <text evidence="1">Belongs to the KAE1 / TsaD family.</text>
</comment>
<dbReference type="EC" id="2.3.1.234" evidence="1"/>
<dbReference type="EMBL" id="AP006840">
    <property type="protein sequence ID" value="BAD41904.1"/>
    <property type="molecule type" value="Genomic_DNA"/>
</dbReference>
<dbReference type="RefSeq" id="WP_011197038.1">
    <property type="nucleotide sequence ID" value="NC_006177.1"/>
</dbReference>
<dbReference type="SMR" id="Q67K94"/>
<dbReference type="STRING" id="292459.STH2921"/>
<dbReference type="KEGG" id="sth:STH2921"/>
<dbReference type="eggNOG" id="COG0533">
    <property type="taxonomic scope" value="Bacteria"/>
</dbReference>
<dbReference type="HOGENOM" id="CLU_023208_0_2_9"/>
<dbReference type="OrthoDB" id="9806197at2"/>
<dbReference type="Proteomes" id="UP000000417">
    <property type="component" value="Chromosome"/>
</dbReference>
<dbReference type="GO" id="GO:0005737">
    <property type="term" value="C:cytoplasm"/>
    <property type="evidence" value="ECO:0007669"/>
    <property type="project" value="UniProtKB-SubCell"/>
</dbReference>
<dbReference type="GO" id="GO:0005506">
    <property type="term" value="F:iron ion binding"/>
    <property type="evidence" value="ECO:0007669"/>
    <property type="project" value="UniProtKB-UniRule"/>
</dbReference>
<dbReference type="GO" id="GO:0061711">
    <property type="term" value="F:N(6)-L-threonylcarbamoyladenine synthase activity"/>
    <property type="evidence" value="ECO:0007669"/>
    <property type="project" value="UniProtKB-EC"/>
</dbReference>
<dbReference type="GO" id="GO:0002949">
    <property type="term" value="P:tRNA threonylcarbamoyladenosine modification"/>
    <property type="evidence" value="ECO:0007669"/>
    <property type="project" value="UniProtKB-UniRule"/>
</dbReference>
<dbReference type="CDD" id="cd24133">
    <property type="entry name" value="ASKHA_NBD_TsaD_bac"/>
    <property type="match status" value="1"/>
</dbReference>
<dbReference type="FunFam" id="3.30.420.40:FF:000040">
    <property type="entry name" value="tRNA N6-adenosine threonylcarbamoyltransferase"/>
    <property type="match status" value="1"/>
</dbReference>
<dbReference type="Gene3D" id="3.30.420.40">
    <property type="match status" value="2"/>
</dbReference>
<dbReference type="HAMAP" id="MF_01445">
    <property type="entry name" value="TsaD"/>
    <property type="match status" value="1"/>
</dbReference>
<dbReference type="InterPro" id="IPR043129">
    <property type="entry name" value="ATPase_NBD"/>
</dbReference>
<dbReference type="InterPro" id="IPR000905">
    <property type="entry name" value="Gcp-like_dom"/>
</dbReference>
<dbReference type="InterPro" id="IPR017861">
    <property type="entry name" value="KAE1/TsaD"/>
</dbReference>
<dbReference type="InterPro" id="IPR017860">
    <property type="entry name" value="Peptidase_M22_CS"/>
</dbReference>
<dbReference type="InterPro" id="IPR022450">
    <property type="entry name" value="TsaD"/>
</dbReference>
<dbReference type="NCBIfam" id="TIGR00329">
    <property type="entry name" value="gcp_kae1"/>
    <property type="match status" value="1"/>
</dbReference>
<dbReference type="NCBIfam" id="TIGR03723">
    <property type="entry name" value="T6A_TsaD_YgjD"/>
    <property type="match status" value="1"/>
</dbReference>
<dbReference type="PANTHER" id="PTHR11735">
    <property type="entry name" value="TRNA N6-ADENOSINE THREONYLCARBAMOYLTRANSFERASE"/>
    <property type="match status" value="1"/>
</dbReference>
<dbReference type="PANTHER" id="PTHR11735:SF6">
    <property type="entry name" value="TRNA N6-ADENOSINE THREONYLCARBAMOYLTRANSFERASE, MITOCHONDRIAL"/>
    <property type="match status" value="1"/>
</dbReference>
<dbReference type="Pfam" id="PF00814">
    <property type="entry name" value="TsaD"/>
    <property type="match status" value="1"/>
</dbReference>
<dbReference type="PRINTS" id="PR00789">
    <property type="entry name" value="OSIALOPTASE"/>
</dbReference>
<dbReference type="SUPFAM" id="SSF53067">
    <property type="entry name" value="Actin-like ATPase domain"/>
    <property type="match status" value="1"/>
</dbReference>
<dbReference type="PROSITE" id="PS01016">
    <property type="entry name" value="GLYCOPROTEASE"/>
    <property type="match status" value="1"/>
</dbReference>
<name>TSAD_SYMTH</name>
<feature type="chain" id="PRO_0000303581" description="tRNA N6-adenosine threonylcarbamoyltransferase">
    <location>
        <begin position="1"/>
        <end position="341"/>
    </location>
</feature>
<feature type="binding site" evidence="1">
    <location>
        <position position="117"/>
    </location>
    <ligand>
        <name>Fe cation</name>
        <dbReference type="ChEBI" id="CHEBI:24875"/>
    </ligand>
</feature>
<feature type="binding site" evidence="1">
    <location>
        <position position="121"/>
    </location>
    <ligand>
        <name>Fe cation</name>
        <dbReference type="ChEBI" id="CHEBI:24875"/>
    </ligand>
</feature>
<feature type="binding site" evidence="1">
    <location>
        <begin position="140"/>
        <end position="144"/>
    </location>
    <ligand>
        <name>substrate</name>
    </ligand>
</feature>
<feature type="binding site" evidence="1">
    <location>
        <position position="173"/>
    </location>
    <ligand>
        <name>substrate</name>
    </ligand>
</feature>
<feature type="binding site" evidence="1">
    <location>
        <position position="186"/>
    </location>
    <ligand>
        <name>substrate</name>
    </ligand>
</feature>
<feature type="binding site" evidence="1">
    <location>
        <position position="278"/>
    </location>
    <ligand>
        <name>substrate</name>
    </ligand>
</feature>
<feature type="binding site" evidence="1">
    <location>
        <position position="306"/>
    </location>
    <ligand>
        <name>Fe cation</name>
        <dbReference type="ChEBI" id="CHEBI:24875"/>
    </ligand>
</feature>
<protein>
    <recommendedName>
        <fullName evidence="1">tRNA N6-adenosine threonylcarbamoyltransferase</fullName>
        <ecNumber evidence="1">2.3.1.234</ecNumber>
    </recommendedName>
    <alternativeName>
        <fullName evidence="1">N6-L-threonylcarbamoyladenine synthase</fullName>
        <shortName evidence="1">t(6)A synthase</shortName>
    </alternativeName>
    <alternativeName>
        <fullName evidence="1">t(6)A37 threonylcarbamoyladenosine biosynthesis protein TsaD</fullName>
    </alternativeName>
    <alternativeName>
        <fullName evidence="1">tRNA threonylcarbamoyladenosine biosynthesis protein TsaD</fullName>
    </alternativeName>
</protein>
<reference key="1">
    <citation type="journal article" date="2004" name="Nucleic Acids Res.">
        <title>Genome sequence of Symbiobacterium thermophilum, an uncultivable bacterium that depends on microbial commensalism.</title>
        <authorList>
            <person name="Ueda K."/>
            <person name="Yamashita A."/>
            <person name="Ishikawa J."/>
            <person name="Shimada M."/>
            <person name="Watsuji T."/>
            <person name="Morimura K."/>
            <person name="Ikeda H."/>
            <person name="Hattori M."/>
            <person name="Beppu T."/>
        </authorList>
    </citation>
    <scope>NUCLEOTIDE SEQUENCE [LARGE SCALE GENOMIC DNA]</scope>
    <source>
        <strain>DSM 24528 / JCM 14929 / IAM 14863 / T</strain>
    </source>
</reference>
<evidence type="ECO:0000255" key="1">
    <source>
        <dbReference type="HAMAP-Rule" id="MF_01445"/>
    </source>
</evidence>
<organism>
    <name type="scientific">Symbiobacterium thermophilum (strain DSM 24528 / JCM 14929 / IAM 14863 / T)</name>
    <dbReference type="NCBI Taxonomy" id="292459"/>
    <lineage>
        <taxon>Bacteria</taxon>
        <taxon>Bacillati</taxon>
        <taxon>Bacillota</taxon>
        <taxon>Clostridia</taxon>
        <taxon>Eubacteriales</taxon>
        <taxon>Symbiobacteriaceae</taxon>
        <taxon>Symbiobacterium</taxon>
    </lineage>
</organism>
<keyword id="KW-0012">Acyltransferase</keyword>
<keyword id="KW-0963">Cytoplasm</keyword>
<keyword id="KW-0408">Iron</keyword>
<keyword id="KW-0479">Metal-binding</keyword>
<keyword id="KW-1185">Reference proteome</keyword>
<keyword id="KW-0808">Transferase</keyword>
<keyword id="KW-0819">tRNA processing</keyword>
<proteinExistence type="inferred from homology"/>
<accession>Q67K94</accession>
<sequence>MKGLSEGLILGIESSCDETAAAVVAGGRRVLSNTVASQVDLFRKYGGVVPEIASRRHLELILPVIREALQMAGVTLEQIDAVAVTHGPGLVGTLLVGLSAAKALAFGLDKPLIGVNHLQGHIYANFLVEPPPEFPLVCLVVSGGHTDLIYMAGHGRMELLGRTLDDAAGEAFDKVARSVGLGYPGGPQVEKLARSGDPEAVPLPRAHTEGPYDFSFSGLKTAVLQYVQRTGPLNDQQRADLAASFQRAVTSVLVERTVKAAEAKGVRQVILAGGVAANGALREEMRAALEPRGIRLGYPPPVLCTDNAAMIAAAGYYLWRAGVRHDLDLNAVPGLGLGIGG</sequence>